<proteinExistence type="inferred from homology"/>
<gene>
    <name evidence="1" type="primary">rny</name>
    <name type="ordered locus">Pmob_0083</name>
</gene>
<organism>
    <name type="scientific">Petrotoga mobilis (strain DSM 10674 / SJ95)</name>
    <dbReference type="NCBI Taxonomy" id="403833"/>
    <lineage>
        <taxon>Bacteria</taxon>
        <taxon>Thermotogati</taxon>
        <taxon>Thermotogota</taxon>
        <taxon>Thermotogae</taxon>
        <taxon>Petrotogales</taxon>
        <taxon>Petrotogaceae</taxon>
        <taxon>Petrotoga</taxon>
    </lineage>
</organism>
<feature type="chain" id="PRO_0000344922" description="Ribonuclease Y">
    <location>
        <begin position="1"/>
        <end position="517"/>
    </location>
</feature>
<feature type="transmembrane region" description="Helical" evidence="1">
    <location>
        <begin position="2"/>
        <end position="22"/>
    </location>
</feature>
<feature type="domain" description="KH" evidence="1">
    <location>
        <begin position="207"/>
        <end position="267"/>
    </location>
</feature>
<feature type="domain" description="HD" evidence="2">
    <location>
        <begin position="333"/>
        <end position="426"/>
    </location>
</feature>
<reference key="1">
    <citation type="submission" date="2007-11" db="EMBL/GenBank/DDBJ databases">
        <title>Complete sequence of Petroga mobilis SJ95.</title>
        <authorList>
            <consortium name="US DOE Joint Genome Institute"/>
            <person name="Copeland A."/>
            <person name="Lucas S."/>
            <person name="Lapidus A."/>
            <person name="Barry K."/>
            <person name="Glavina del Rio T."/>
            <person name="Dalin E."/>
            <person name="Tice H."/>
            <person name="Pitluck S."/>
            <person name="Meincke L."/>
            <person name="Brettin T."/>
            <person name="Bruce D."/>
            <person name="Detter J.C."/>
            <person name="Han C."/>
            <person name="Kuske C.R."/>
            <person name="Schmutz J."/>
            <person name="Larimer F."/>
            <person name="Land M."/>
            <person name="Hauser L."/>
            <person name="Kyrpides N."/>
            <person name="Mikhailova N."/>
            <person name="Noll K."/>
            <person name="Richardson P."/>
        </authorList>
    </citation>
    <scope>NUCLEOTIDE SEQUENCE [LARGE SCALE GENOMIC DNA]</scope>
    <source>
        <strain>DSM 10674 / SJ95</strain>
    </source>
</reference>
<evidence type="ECO:0000255" key="1">
    <source>
        <dbReference type="HAMAP-Rule" id="MF_00335"/>
    </source>
</evidence>
<evidence type="ECO:0000255" key="2">
    <source>
        <dbReference type="PROSITE-ProRule" id="PRU01175"/>
    </source>
</evidence>
<name>RNY_PETMO</name>
<accession>A9BEV4</accession>
<comment type="function">
    <text evidence="1">Endoribonuclease that initiates mRNA decay.</text>
</comment>
<comment type="subcellular location">
    <subcellularLocation>
        <location evidence="1">Cell membrane</location>
        <topology evidence="1">Single-pass membrane protein</topology>
    </subcellularLocation>
</comment>
<comment type="similarity">
    <text evidence="1">Belongs to the RNase Y family.</text>
</comment>
<sequence length="517" mass="59401">MEILVYIIIGIAIFILSLLVGINIGNRRMISTLATKKEELEVEIKNKQKEIEKMLKNAEEEAKALKQKELLEAKEEIHRLRQEFDSEAKQQREELKANEERLIRKEESLAKKEENLEKLKEKLEVQHENVLKLEKELETKLNEIAKMTEEEARQVVINEARDKYEREIAQKFKEIKDHYEEESKKYARWVITTAIQRYASDVTNEITTSTVALPTDDMKGRIIGREGRNIRTFEKLTGTDLIIDDTPEIVVISSFNPLRREIAKRTLEMLVADGRIHPARIEELYEKSKNEIQEYIKEVGKEAVMRVGIKQPHLEIIKLLGRLKFRTSYGQDVLEHSIEVAQFAGMMASELGLNVELAKRAALLHDLGKAVDHEVEGSHAIVGGQIAKRYGEKLEVVNAIQYHHNEVDPMTPEAVLVAASDALSASRPGARKETLENYIRRIEQLEEIAKSFRYVDKAYAIQAGRELRIIVQPDKVEDEIAEKLAHDISVQIEEKVQYPGVIKVTVIREKRSISYAS</sequence>
<protein>
    <recommendedName>
        <fullName evidence="1">Ribonuclease Y</fullName>
        <shortName evidence="1">RNase Y</shortName>
        <ecNumber evidence="1">3.1.-.-</ecNumber>
    </recommendedName>
</protein>
<dbReference type="EC" id="3.1.-.-" evidence="1"/>
<dbReference type="EMBL" id="CP000879">
    <property type="protein sequence ID" value="ABX30832.1"/>
    <property type="molecule type" value="Genomic_DNA"/>
</dbReference>
<dbReference type="SMR" id="A9BEV4"/>
<dbReference type="STRING" id="403833.Pmob_0083"/>
<dbReference type="KEGG" id="pmo:Pmob_0083"/>
<dbReference type="eggNOG" id="COG1193">
    <property type="taxonomic scope" value="Bacteria"/>
</dbReference>
<dbReference type="eggNOG" id="COG1418">
    <property type="taxonomic scope" value="Bacteria"/>
</dbReference>
<dbReference type="HOGENOM" id="CLU_028328_1_0_0"/>
<dbReference type="OrthoDB" id="9803205at2"/>
<dbReference type="Proteomes" id="UP000000789">
    <property type="component" value="Chromosome"/>
</dbReference>
<dbReference type="GO" id="GO:0005886">
    <property type="term" value="C:plasma membrane"/>
    <property type="evidence" value="ECO:0007669"/>
    <property type="project" value="UniProtKB-SubCell"/>
</dbReference>
<dbReference type="GO" id="GO:0003723">
    <property type="term" value="F:RNA binding"/>
    <property type="evidence" value="ECO:0007669"/>
    <property type="project" value="UniProtKB-UniRule"/>
</dbReference>
<dbReference type="GO" id="GO:0004521">
    <property type="term" value="F:RNA endonuclease activity"/>
    <property type="evidence" value="ECO:0007669"/>
    <property type="project" value="UniProtKB-UniRule"/>
</dbReference>
<dbReference type="GO" id="GO:0006402">
    <property type="term" value="P:mRNA catabolic process"/>
    <property type="evidence" value="ECO:0007669"/>
    <property type="project" value="UniProtKB-UniRule"/>
</dbReference>
<dbReference type="CDD" id="cd00077">
    <property type="entry name" value="HDc"/>
    <property type="match status" value="1"/>
</dbReference>
<dbReference type="CDD" id="cd22431">
    <property type="entry name" value="KH-I_RNaseY"/>
    <property type="match status" value="1"/>
</dbReference>
<dbReference type="FunFam" id="1.10.3210.10:FF:000022">
    <property type="entry name" value="Ribonuclease Y"/>
    <property type="match status" value="1"/>
</dbReference>
<dbReference type="Gene3D" id="1.10.3210.10">
    <property type="entry name" value="Hypothetical protein af1432"/>
    <property type="match status" value="1"/>
</dbReference>
<dbReference type="Gene3D" id="3.30.1370.10">
    <property type="entry name" value="K Homology domain, type 1"/>
    <property type="match status" value="1"/>
</dbReference>
<dbReference type="HAMAP" id="MF_00335">
    <property type="entry name" value="RNase_Y"/>
    <property type="match status" value="1"/>
</dbReference>
<dbReference type="InterPro" id="IPR003607">
    <property type="entry name" value="HD/PDEase_dom"/>
</dbReference>
<dbReference type="InterPro" id="IPR006674">
    <property type="entry name" value="HD_domain"/>
</dbReference>
<dbReference type="InterPro" id="IPR006675">
    <property type="entry name" value="HDIG_dom"/>
</dbReference>
<dbReference type="InterPro" id="IPR004087">
    <property type="entry name" value="KH_dom"/>
</dbReference>
<dbReference type="InterPro" id="IPR004088">
    <property type="entry name" value="KH_dom_type_1"/>
</dbReference>
<dbReference type="InterPro" id="IPR036612">
    <property type="entry name" value="KH_dom_type_1_sf"/>
</dbReference>
<dbReference type="InterPro" id="IPR017705">
    <property type="entry name" value="Ribonuclease_Y"/>
</dbReference>
<dbReference type="InterPro" id="IPR022711">
    <property type="entry name" value="RNase_Y_N"/>
</dbReference>
<dbReference type="NCBIfam" id="TIGR00277">
    <property type="entry name" value="HDIG"/>
    <property type="match status" value="1"/>
</dbReference>
<dbReference type="NCBIfam" id="TIGR03319">
    <property type="entry name" value="RNase_Y"/>
    <property type="match status" value="1"/>
</dbReference>
<dbReference type="PANTHER" id="PTHR12826">
    <property type="entry name" value="RIBONUCLEASE Y"/>
    <property type="match status" value="1"/>
</dbReference>
<dbReference type="PANTHER" id="PTHR12826:SF15">
    <property type="entry name" value="RIBONUCLEASE Y"/>
    <property type="match status" value="1"/>
</dbReference>
<dbReference type="Pfam" id="PF01966">
    <property type="entry name" value="HD"/>
    <property type="match status" value="1"/>
</dbReference>
<dbReference type="Pfam" id="PF00013">
    <property type="entry name" value="KH_1"/>
    <property type="match status" value="1"/>
</dbReference>
<dbReference type="Pfam" id="PF12072">
    <property type="entry name" value="RNase_Y_N"/>
    <property type="match status" value="1"/>
</dbReference>
<dbReference type="SMART" id="SM00471">
    <property type="entry name" value="HDc"/>
    <property type="match status" value="1"/>
</dbReference>
<dbReference type="SMART" id="SM00322">
    <property type="entry name" value="KH"/>
    <property type="match status" value="1"/>
</dbReference>
<dbReference type="SUPFAM" id="SSF54791">
    <property type="entry name" value="Eukaryotic type KH-domain (KH-domain type I)"/>
    <property type="match status" value="1"/>
</dbReference>
<dbReference type="SUPFAM" id="SSF109604">
    <property type="entry name" value="HD-domain/PDEase-like"/>
    <property type="match status" value="1"/>
</dbReference>
<dbReference type="PROSITE" id="PS51831">
    <property type="entry name" value="HD"/>
    <property type="match status" value="1"/>
</dbReference>
<dbReference type="PROSITE" id="PS50084">
    <property type="entry name" value="KH_TYPE_1"/>
    <property type="match status" value="1"/>
</dbReference>
<keyword id="KW-1003">Cell membrane</keyword>
<keyword id="KW-0255">Endonuclease</keyword>
<keyword id="KW-0378">Hydrolase</keyword>
<keyword id="KW-0472">Membrane</keyword>
<keyword id="KW-0540">Nuclease</keyword>
<keyword id="KW-0694">RNA-binding</keyword>
<keyword id="KW-0812">Transmembrane</keyword>
<keyword id="KW-1133">Transmembrane helix</keyword>